<keyword id="KW-0030">Aminoacyl-tRNA synthetase</keyword>
<keyword id="KW-0067">ATP-binding</keyword>
<keyword id="KW-0963">Cytoplasm</keyword>
<keyword id="KW-0436">Ligase</keyword>
<keyword id="KW-0479">Metal-binding</keyword>
<keyword id="KW-0547">Nucleotide-binding</keyword>
<keyword id="KW-0648">Protein biosynthesis</keyword>
<keyword id="KW-1185">Reference proteome</keyword>
<keyword id="KW-0694">RNA-binding</keyword>
<keyword id="KW-0820">tRNA-binding</keyword>
<keyword id="KW-0862">Zinc</keyword>
<reference key="1">
    <citation type="journal article" date="2004" name="PLoS Biol.">
        <title>Genomic insights into methanotrophy: the complete genome sequence of Methylococcus capsulatus (Bath).</title>
        <authorList>
            <person name="Ward N.L."/>
            <person name="Larsen O."/>
            <person name="Sakwa J."/>
            <person name="Bruseth L."/>
            <person name="Khouri H.M."/>
            <person name="Durkin A.S."/>
            <person name="Dimitrov G."/>
            <person name="Jiang L."/>
            <person name="Scanlan D."/>
            <person name="Kang K.H."/>
            <person name="Lewis M.R."/>
            <person name="Nelson K.E."/>
            <person name="Methe B.A."/>
            <person name="Wu M."/>
            <person name="Heidelberg J.F."/>
            <person name="Paulsen I.T."/>
            <person name="Fouts D.E."/>
            <person name="Ravel J."/>
            <person name="Tettelin H."/>
            <person name="Ren Q."/>
            <person name="Read T.D."/>
            <person name="DeBoy R.T."/>
            <person name="Seshadri R."/>
            <person name="Salzberg S.L."/>
            <person name="Jensen H.B."/>
            <person name="Birkeland N.K."/>
            <person name="Nelson W.C."/>
            <person name="Dodson R.J."/>
            <person name="Grindhaug S.H."/>
            <person name="Holt I.E."/>
            <person name="Eidhammer I."/>
            <person name="Jonasen I."/>
            <person name="Vanaken S."/>
            <person name="Utterback T.R."/>
            <person name="Feldblyum T.V."/>
            <person name="Fraser C.M."/>
            <person name="Lillehaug J.R."/>
            <person name="Eisen J.A."/>
        </authorList>
    </citation>
    <scope>NUCLEOTIDE SEQUENCE [LARGE SCALE GENOMIC DNA]</scope>
    <source>
        <strain>ATCC 33009 / NCIMB 11132 / Bath</strain>
    </source>
</reference>
<gene>
    <name evidence="1" type="primary">alaS</name>
    <name type="ordered locus">MCA0389</name>
</gene>
<protein>
    <recommendedName>
        <fullName evidence="1">Alanine--tRNA ligase</fullName>
        <ecNumber evidence="1">6.1.1.7</ecNumber>
    </recommendedName>
    <alternativeName>
        <fullName evidence="1">Alanyl-tRNA synthetase</fullName>
        <shortName evidence="1">AlaRS</shortName>
    </alternativeName>
</protein>
<proteinExistence type="inferred from homology"/>
<name>SYA_METCA</name>
<comment type="function">
    <text evidence="1">Catalyzes the attachment of alanine to tRNA(Ala) in a two-step reaction: alanine is first activated by ATP to form Ala-AMP and then transferred to the acceptor end of tRNA(Ala). Also edits incorrectly charged Ser-tRNA(Ala) and Gly-tRNA(Ala) via its editing domain.</text>
</comment>
<comment type="catalytic activity">
    <reaction evidence="1">
        <text>tRNA(Ala) + L-alanine + ATP = L-alanyl-tRNA(Ala) + AMP + diphosphate</text>
        <dbReference type="Rhea" id="RHEA:12540"/>
        <dbReference type="Rhea" id="RHEA-COMP:9657"/>
        <dbReference type="Rhea" id="RHEA-COMP:9923"/>
        <dbReference type="ChEBI" id="CHEBI:30616"/>
        <dbReference type="ChEBI" id="CHEBI:33019"/>
        <dbReference type="ChEBI" id="CHEBI:57972"/>
        <dbReference type="ChEBI" id="CHEBI:78442"/>
        <dbReference type="ChEBI" id="CHEBI:78497"/>
        <dbReference type="ChEBI" id="CHEBI:456215"/>
        <dbReference type="EC" id="6.1.1.7"/>
    </reaction>
</comment>
<comment type="cofactor">
    <cofactor evidence="1">
        <name>Zn(2+)</name>
        <dbReference type="ChEBI" id="CHEBI:29105"/>
    </cofactor>
    <text evidence="1">Binds 1 zinc ion per subunit.</text>
</comment>
<comment type="subcellular location">
    <subcellularLocation>
        <location evidence="1">Cytoplasm</location>
    </subcellularLocation>
</comment>
<comment type="domain">
    <text evidence="1">Consists of three domains; the N-terminal catalytic domain, the editing domain and the C-terminal C-Ala domain. The editing domain removes incorrectly charged amino acids, while the C-Ala domain, along with tRNA(Ala), serves as a bridge to cooperatively bring together the editing and aminoacylation centers thus stimulating deacylation of misacylated tRNAs.</text>
</comment>
<comment type="similarity">
    <text evidence="1">Belongs to the class-II aminoacyl-tRNA synthetase family.</text>
</comment>
<accession>Q60BS6</accession>
<dbReference type="EC" id="6.1.1.7" evidence="1"/>
<dbReference type="EMBL" id="AE017282">
    <property type="protein sequence ID" value="AAU90475.1"/>
    <property type="molecule type" value="Genomic_DNA"/>
</dbReference>
<dbReference type="RefSeq" id="WP_010959749.1">
    <property type="nucleotide sequence ID" value="NC_002977.6"/>
</dbReference>
<dbReference type="SMR" id="Q60BS6"/>
<dbReference type="STRING" id="243233.MCA0389"/>
<dbReference type="GeneID" id="88222730"/>
<dbReference type="KEGG" id="mca:MCA0389"/>
<dbReference type="eggNOG" id="COG0013">
    <property type="taxonomic scope" value="Bacteria"/>
</dbReference>
<dbReference type="HOGENOM" id="CLU_004485_1_0_6"/>
<dbReference type="Proteomes" id="UP000006821">
    <property type="component" value="Chromosome"/>
</dbReference>
<dbReference type="GO" id="GO:0005829">
    <property type="term" value="C:cytosol"/>
    <property type="evidence" value="ECO:0007669"/>
    <property type="project" value="TreeGrafter"/>
</dbReference>
<dbReference type="GO" id="GO:0004813">
    <property type="term" value="F:alanine-tRNA ligase activity"/>
    <property type="evidence" value="ECO:0007669"/>
    <property type="project" value="UniProtKB-UniRule"/>
</dbReference>
<dbReference type="GO" id="GO:0002161">
    <property type="term" value="F:aminoacyl-tRNA deacylase activity"/>
    <property type="evidence" value="ECO:0007669"/>
    <property type="project" value="TreeGrafter"/>
</dbReference>
<dbReference type="GO" id="GO:0005524">
    <property type="term" value="F:ATP binding"/>
    <property type="evidence" value="ECO:0007669"/>
    <property type="project" value="UniProtKB-UniRule"/>
</dbReference>
<dbReference type="GO" id="GO:0000049">
    <property type="term" value="F:tRNA binding"/>
    <property type="evidence" value="ECO:0007669"/>
    <property type="project" value="UniProtKB-KW"/>
</dbReference>
<dbReference type="GO" id="GO:0008270">
    <property type="term" value="F:zinc ion binding"/>
    <property type="evidence" value="ECO:0007669"/>
    <property type="project" value="UniProtKB-UniRule"/>
</dbReference>
<dbReference type="GO" id="GO:0006419">
    <property type="term" value="P:alanyl-tRNA aminoacylation"/>
    <property type="evidence" value="ECO:0007669"/>
    <property type="project" value="UniProtKB-UniRule"/>
</dbReference>
<dbReference type="GO" id="GO:0045892">
    <property type="term" value="P:negative regulation of DNA-templated transcription"/>
    <property type="evidence" value="ECO:0007669"/>
    <property type="project" value="TreeGrafter"/>
</dbReference>
<dbReference type="CDD" id="cd00673">
    <property type="entry name" value="AlaRS_core"/>
    <property type="match status" value="1"/>
</dbReference>
<dbReference type="FunFam" id="2.40.30.130:FF:000001">
    <property type="entry name" value="Alanine--tRNA ligase"/>
    <property type="match status" value="1"/>
</dbReference>
<dbReference type="FunFam" id="3.10.310.40:FF:000001">
    <property type="entry name" value="Alanine--tRNA ligase"/>
    <property type="match status" value="1"/>
</dbReference>
<dbReference type="FunFam" id="3.30.54.20:FF:000001">
    <property type="entry name" value="Alanine--tRNA ligase"/>
    <property type="match status" value="1"/>
</dbReference>
<dbReference type="FunFam" id="3.30.930.10:FF:000004">
    <property type="entry name" value="Alanine--tRNA ligase"/>
    <property type="match status" value="1"/>
</dbReference>
<dbReference type="FunFam" id="3.30.980.10:FF:000004">
    <property type="entry name" value="Alanine--tRNA ligase, cytoplasmic"/>
    <property type="match status" value="1"/>
</dbReference>
<dbReference type="Gene3D" id="2.40.30.130">
    <property type="match status" value="1"/>
</dbReference>
<dbReference type="Gene3D" id="3.10.310.40">
    <property type="match status" value="1"/>
</dbReference>
<dbReference type="Gene3D" id="3.30.54.20">
    <property type="match status" value="1"/>
</dbReference>
<dbReference type="Gene3D" id="6.10.250.550">
    <property type="match status" value="1"/>
</dbReference>
<dbReference type="Gene3D" id="3.30.930.10">
    <property type="entry name" value="Bira Bifunctional Protein, Domain 2"/>
    <property type="match status" value="1"/>
</dbReference>
<dbReference type="Gene3D" id="3.30.980.10">
    <property type="entry name" value="Threonyl-trna Synthetase, Chain A, domain 2"/>
    <property type="match status" value="1"/>
</dbReference>
<dbReference type="HAMAP" id="MF_00036_B">
    <property type="entry name" value="Ala_tRNA_synth_B"/>
    <property type="match status" value="1"/>
</dbReference>
<dbReference type="InterPro" id="IPR045864">
    <property type="entry name" value="aa-tRNA-synth_II/BPL/LPL"/>
</dbReference>
<dbReference type="InterPro" id="IPR002318">
    <property type="entry name" value="Ala-tRNA-lgiase_IIc"/>
</dbReference>
<dbReference type="InterPro" id="IPR018162">
    <property type="entry name" value="Ala-tRNA-ligase_IIc_anticod-bd"/>
</dbReference>
<dbReference type="InterPro" id="IPR018165">
    <property type="entry name" value="Ala-tRNA-synth_IIc_core"/>
</dbReference>
<dbReference type="InterPro" id="IPR018164">
    <property type="entry name" value="Ala-tRNA-synth_IIc_N"/>
</dbReference>
<dbReference type="InterPro" id="IPR050058">
    <property type="entry name" value="Ala-tRNA_ligase"/>
</dbReference>
<dbReference type="InterPro" id="IPR023033">
    <property type="entry name" value="Ala_tRNA_ligase_euk/bac"/>
</dbReference>
<dbReference type="InterPro" id="IPR003156">
    <property type="entry name" value="DHHA1_dom"/>
</dbReference>
<dbReference type="InterPro" id="IPR018163">
    <property type="entry name" value="Thr/Ala-tRNA-synth_IIc_edit"/>
</dbReference>
<dbReference type="InterPro" id="IPR009000">
    <property type="entry name" value="Transl_B-barrel_sf"/>
</dbReference>
<dbReference type="InterPro" id="IPR012947">
    <property type="entry name" value="tRNA_SAD"/>
</dbReference>
<dbReference type="NCBIfam" id="TIGR00344">
    <property type="entry name" value="alaS"/>
    <property type="match status" value="1"/>
</dbReference>
<dbReference type="PANTHER" id="PTHR11777:SF9">
    <property type="entry name" value="ALANINE--TRNA LIGASE, CYTOPLASMIC"/>
    <property type="match status" value="1"/>
</dbReference>
<dbReference type="PANTHER" id="PTHR11777">
    <property type="entry name" value="ALANYL-TRNA SYNTHETASE"/>
    <property type="match status" value="1"/>
</dbReference>
<dbReference type="Pfam" id="PF02272">
    <property type="entry name" value="DHHA1"/>
    <property type="match status" value="1"/>
</dbReference>
<dbReference type="Pfam" id="PF01411">
    <property type="entry name" value="tRNA-synt_2c"/>
    <property type="match status" value="1"/>
</dbReference>
<dbReference type="Pfam" id="PF07973">
    <property type="entry name" value="tRNA_SAD"/>
    <property type="match status" value="1"/>
</dbReference>
<dbReference type="PRINTS" id="PR00980">
    <property type="entry name" value="TRNASYNTHALA"/>
</dbReference>
<dbReference type="SMART" id="SM00863">
    <property type="entry name" value="tRNA_SAD"/>
    <property type="match status" value="1"/>
</dbReference>
<dbReference type="SUPFAM" id="SSF55681">
    <property type="entry name" value="Class II aaRS and biotin synthetases"/>
    <property type="match status" value="1"/>
</dbReference>
<dbReference type="SUPFAM" id="SSF101353">
    <property type="entry name" value="Putative anticodon-binding domain of alanyl-tRNA synthetase (AlaRS)"/>
    <property type="match status" value="1"/>
</dbReference>
<dbReference type="SUPFAM" id="SSF55186">
    <property type="entry name" value="ThrRS/AlaRS common domain"/>
    <property type="match status" value="1"/>
</dbReference>
<dbReference type="SUPFAM" id="SSF50447">
    <property type="entry name" value="Translation proteins"/>
    <property type="match status" value="1"/>
</dbReference>
<dbReference type="PROSITE" id="PS50860">
    <property type="entry name" value="AA_TRNA_LIGASE_II_ALA"/>
    <property type="match status" value="1"/>
</dbReference>
<organism>
    <name type="scientific">Methylococcus capsulatus (strain ATCC 33009 / NCIMB 11132 / Bath)</name>
    <dbReference type="NCBI Taxonomy" id="243233"/>
    <lineage>
        <taxon>Bacteria</taxon>
        <taxon>Pseudomonadati</taxon>
        <taxon>Pseudomonadota</taxon>
        <taxon>Gammaproteobacteria</taxon>
        <taxon>Methylococcales</taxon>
        <taxon>Methylococcaceae</taxon>
        <taxon>Methylococcus</taxon>
    </lineage>
</organism>
<feature type="chain" id="PRO_0000075143" description="Alanine--tRNA ligase">
    <location>
        <begin position="1"/>
        <end position="867"/>
    </location>
</feature>
<feature type="binding site" evidence="1">
    <location>
        <position position="554"/>
    </location>
    <ligand>
        <name>Zn(2+)</name>
        <dbReference type="ChEBI" id="CHEBI:29105"/>
    </ligand>
</feature>
<feature type="binding site" evidence="1">
    <location>
        <position position="558"/>
    </location>
    <ligand>
        <name>Zn(2+)</name>
        <dbReference type="ChEBI" id="CHEBI:29105"/>
    </ligand>
</feature>
<feature type="binding site" evidence="1">
    <location>
        <position position="656"/>
    </location>
    <ligand>
        <name>Zn(2+)</name>
        <dbReference type="ChEBI" id="CHEBI:29105"/>
    </ligand>
</feature>
<feature type="binding site" evidence="1">
    <location>
        <position position="660"/>
    </location>
    <ligand>
        <name>Zn(2+)</name>
        <dbReference type="ChEBI" id="CHEBI:29105"/>
    </ligand>
</feature>
<sequence length="867" mass="95545">MTSAELRARFLKFFADRGHTVVASSSLVPVNDPTLLFTNAGMVQFKDVFLGREHRPYVRAASAQRCVRAGGKHNDLENVGYTARHHTFFEMLGNFSFGDYFKREAIVYAWEFLTEVLMLPPERLWITVYAEDKEAERIWLEEVGVDPGRFTRIATSDNFWSMGDTGPCGPCSEIFYDHGPSVAGGPPGTPEEDGDRYVEIWNLVFMQYERAGDGTLTPLPKPSVDTGMGLERLAAVMQRVRNNYDIDLFRNLVKAAAELAGTTDLAQSSLRVIADHIRSCAFLVTDGVLPSNEGRGYVLRRIIRRAIRHGYKLGIREPFFYKLVGPLCAEMGQAYPELVEARPRVEQVLDKEEERFAETLEQGMKILDVAIRDLGSPVISGDTAFQLYDTYGFPVDLTADVAREHGLQVDMAGFERAMEAQRERARAASHFSVDYSQEIHLDVACEFTGYRNAVEDTRIVALLRDGQAVDRLEAGEDGVVVLEKTPFYAESGGQVGDRGVIRSDSAVFEVADTRKQGSDLILHRGKLREGALLRGAVCRAEVEQSLRLATALNHSATHLLHAALRRVLGEHVTQKGSLVDPERLRFDFSHFEPVSPEQLDEIERLVNREIRRNAEVTAEVMAKDAAMRLGAMALFGEKYGDDVRVLRIGDFSTELCGGIHARRAGDIGLFKIVSESGVAAGVRRIEAVTGAAAVEAVEATERLLRRLAERMKAGRDTLEERLDQMFEKNRALERELERLKAKTAGAAGADLASRAVDIAGVKVLAARVDEADARMLRELVDQLKDRLGSAAIVLAAVEGGKVSLVAGVTRDQTGHIRAGDLVNSVATRIGGKGGGRPDLAQAGGNRPEELQGALDGVPEWVRRMLNA</sequence>
<evidence type="ECO:0000255" key="1">
    <source>
        <dbReference type="HAMAP-Rule" id="MF_00036"/>
    </source>
</evidence>